<dbReference type="EMBL" id="U53509">
    <property type="protein sequence ID" value="AAB09440.1"/>
    <property type="molecule type" value="Genomic_DNA"/>
</dbReference>
<dbReference type="EMBL" id="U40786">
    <property type="protein sequence ID" value="AAC24470.1"/>
    <property type="molecule type" value="Genomic_DNA"/>
</dbReference>
<dbReference type="EMBL" id="AF055088">
    <property type="protein sequence ID" value="AAD09975.1"/>
    <property type="molecule type" value="Genomic_DNA"/>
</dbReference>
<dbReference type="EMBL" id="AF248229">
    <property type="protein sequence ID" value="AAF70663.1"/>
    <property type="molecule type" value="Genomic_DNA"/>
</dbReference>
<dbReference type="EMBL" id="AF248231">
    <property type="protein sequence ID" value="AAF70665.1"/>
    <property type="molecule type" value="Genomic_DNA"/>
</dbReference>
<dbReference type="EMBL" id="AF248232">
    <property type="protein sequence ID" value="AAF70666.1"/>
    <property type="molecule type" value="Genomic_DNA"/>
</dbReference>
<dbReference type="EMBL" id="AF248233">
    <property type="protein sequence ID" value="AAF70667.1"/>
    <property type="molecule type" value="Genomic_DNA"/>
</dbReference>
<dbReference type="EMBL" id="AF248234">
    <property type="protein sequence ID" value="AAF70668.1"/>
    <property type="molecule type" value="Genomic_DNA"/>
</dbReference>
<dbReference type="EMBL" id="AE005672">
    <property type="protein sequence ID" value="AAK75729.1"/>
    <property type="molecule type" value="Genomic_DNA"/>
</dbReference>
<dbReference type="PIR" id="H95191">
    <property type="entry name" value="H95191"/>
</dbReference>
<dbReference type="RefSeq" id="WP_000733059.1">
    <property type="nucleotide sequence ID" value="NZ_CP155539.1"/>
</dbReference>
<dbReference type="PDB" id="1PSZ">
    <property type="method" value="X-ray"/>
    <property type="resolution" value="2.00 A"/>
    <property type="chains" value="A=19-309"/>
</dbReference>
<dbReference type="PDB" id="3ZK7">
    <property type="method" value="X-ray"/>
    <property type="resolution" value="1.69 A"/>
    <property type="chains" value="A/B=32-309"/>
</dbReference>
<dbReference type="PDB" id="3ZK8">
    <property type="method" value="X-ray"/>
    <property type="resolution" value="1.65 A"/>
    <property type="chains" value="A/B=32-309"/>
</dbReference>
<dbReference type="PDB" id="3ZK9">
    <property type="method" value="X-ray"/>
    <property type="resolution" value="1.45 A"/>
    <property type="chains" value="A/B=32-309"/>
</dbReference>
<dbReference type="PDB" id="3ZKA">
    <property type="method" value="X-ray"/>
    <property type="resolution" value="1.55 A"/>
    <property type="chains" value="A/B=32-309"/>
</dbReference>
<dbReference type="PDB" id="3ZTT">
    <property type="method" value="X-ray"/>
    <property type="resolution" value="2.70 A"/>
    <property type="chains" value="A/B/C/D=19-309"/>
</dbReference>
<dbReference type="PDB" id="4UTO">
    <property type="method" value="X-ray"/>
    <property type="resolution" value="1.55 A"/>
    <property type="chains" value="A/B=1-309"/>
</dbReference>
<dbReference type="PDB" id="4UTP">
    <property type="method" value="X-ray"/>
    <property type="resolution" value="2.00 A"/>
    <property type="chains" value="A/B=1-309"/>
</dbReference>
<dbReference type="PDBsum" id="1PSZ"/>
<dbReference type="PDBsum" id="3ZK7"/>
<dbReference type="PDBsum" id="3ZK8"/>
<dbReference type="PDBsum" id="3ZK9"/>
<dbReference type="PDBsum" id="3ZKA"/>
<dbReference type="PDBsum" id="3ZTT"/>
<dbReference type="PDBsum" id="4UTO"/>
<dbReference type="PDBsum" id="4UTP"/>
<dbReference type="SMR" id="P0A4G2"/>
<dbReference type="TCDB" id="3.A.1.15.14">
    <property type="family name" value="the atp-binding cassette (abc) superfamily"/>
</dbReference>
<dbReference type="PaxDb" id="170187-SP_1650"/>
<dbReference type="EnsemblBacteria" id="AAK75729">
    <property type="protein sequence ID" value="AAK75729"/>
    <property type="gene ID" value="SP_1650"/>
</dbReference>
<dbReference type="GeneID" id="45653136"/>
<dbReference type="KEGG" id="spn:SP_1650"/>
<dbReference type="eggNOG" id="COG0803">
    <property type="taxonomic scope" value="Bacteria"/>
</dbReference>
<dbReference type="PhylomeDB" id="P0A4G2"/>
<dbReference type="BioCyc" id="SPNE170187:G1FZB-1671-MONOMER"/>
<dbReference type="EvolutionaryTrace" id="P0A4G2"/>
<dbReference type="Proteomes" id="UP000000585">
    <property type="component" value="Chromosome"/>
</dbReference>
<dbReference type="GO" id="GO:0005886">
    <property type="term" value="C:plasma membrane"/>
    <property type="evidence" value="ECO:0007669"/>
    <property type="project" value="UniProtKB-SubCell"/>
</dbReference>
<dbReference type="GO" id="GO:0046872">
    <property type="term" value="F:metal ion binding"/>
    <property type="evidence" value="ECO:0007669"/>
    <property type="project" value="UniProtKB-KW"/>
</dbReference>
<dbReference type="GO" id="GO:0007155">
    <property type="term" value="P:cell adhesion"/>
    <property type="evidence" value="ECO:0007669"/>
    <property type="project" value="InterPro"/>
</dbReference>
<dbReference type="GO" id="GO:0030001">
    <property type="term" value="P:metal ion transport"/>
    <property type="evidence" value="ECO:0007669"/>
    <property type="project" value="InterPro"/>
</dbReference>
<dbReference type="CDD" id="cd01137">
    <property type="entry name" value="PsaA"/>
    <property type="match status" value="1"/>
</dbReference>
<dbReference type="Gene3D" id="3.40.50.1980">
    <property type="entry name" value="Nitrogenase molybdenum iron protein domain"/>
    <property type="match status" value="2"/>
</dbReference>
<dbReference type="InterPro" id="IPR006129">
    <property type="entry name" value="AdhesinB"/>
</dbReference>
<dbReference type="InterPro" id="IPR050492">
    <property type="entry name" value="Bact_metal-bind_prot9"/>
</dbReference>
<dbReference type="InterPro" id="IPR006128">
    <property type="entry name" value="Lipoprotein_PsaA-like"/>
</dbReference>
<dbReference type="InterPro" id="IPR006127">
    <property type="entry name" value="ZnuA-like"/>
</dbReference>
<dbReference type="NCBIfam" id="NF040928">
    <property type="entry name" value="ABC_lipo_SloC"/>
    <property type="match status" value="1"/>
</dbReference>
<dbReference type="PANTHER" id="PTHR42953">
    <property type="entry name" value="HIGH-AFFINITY ZINC UPTAKE SYSTEM PROTEIN ZNUA-RELATED"/>
    <property type="match status" value="1"/>
</dbReference>
<dbReference type="PANTHER" id="PTHR42953:SF1">
    <property type="entry name" value="METAL-BINDING PROTEIN HI_0362-RELATED"/>
    <property type="match status" value="1"/>
</dbReference>
<dbReference type="Pfam" id="PF01297">
    <property type="entry name" value="ZnuA"/>
    <property type="match status" value="1"/>
</dbReference>
<dbReference type="PRINTS" id="PR00691">
    <property type="entry name" value="ADHESINB"/>
</dbReference>
<dbReference type="PRINTS" id="PR00690">
    <property type="entry name" value="ADHESNFAMILY"/>
</dbReference>
<dbReference type="SUPFAM" id="SSF53807">
    <property type="entry name" value="Helical backbone' metal receptor"/>
    <property type="match status" value="1"/>
</dbReference>
<dbReference type="PROSITE" id="PS51257">
    <property type="entry name" value="PROKAR_LIPOPROTEIN"/>
    <property type="match status" value="1"/>
</dbReference>
<name>MTSA_STRPN</name>
<comment type="function">
    <text evidence="2 3">Part of the ATP-binding cassette (ABC) transport system PsaABC involved in manganese import (PubMed:22072971, PubMed:9379902). Binds manganese with high affinity and specificity and delivers it to the membrane permease for translocation into the cytoplasm (PubMed:22072971). Also acts as an adhesin which is involved on adherence to extracellular matrix (PubMed:9379902). It is an important factor in pathogenesis and infection (PubMed:9379902).</text>
</comment>
<comment type="subcellular location">
    <subcellularLocation>
        <location evidence="1">Cell membrane</location>
        <topology evidence="1">Lipid-anchor</topology>
    </subcellularLocation>
</comment>
<comment type="disruption phenotype">
    <text evidence="2">Reduces growth (PubMed:22072971). Severe reduction in intracellular Mn(2+) accumulation without affecting intracellular Zn(2+) accumulation (PubMed:22072971). Severe reduction in survival rates in oxidative stress conditions and in presence of human polymorphonuclear leukocytes (PMNs) (PubMed:22072971).</text>
</comment>
<comment type="miscellaneous">
    <text evidence="2">Zn(2+) can bind to PsaA but cannot be transported by the permease into the cytoplasm (PubMed:22072971). At high Zn(2+) concentrations, Zn(2+) binding competes for Mn(2+) transport impairing growth and rendering S.pneumoniae hypersensitive to oxidative and polymorphonuclear leukocyte-mediated killing (PubMed:22072971).</text>
</comment>
<comment type="similarity">
    <text evidence="4">Belongs to the bacterial solute-binding protein 9 family. Lipoprotein receptor antigen (Lrai) subfamily.</text>
</comment>
<feature type="signal peptide" evidence="1">
    <location>
        <begin position="1"/>
        <end position="19"/>
    </location>
</feature>
<feature type="chain" id="PRO_0000031891" description="Manganese ABC transporter substrate-binding lipoprotein PsaA">
    <location>
        <begin position="20"/>
        <end position="309"/>
    </location>
</feature>
<feature type="binding site" evidence="2 5 6 7">
    <location>
        <position position="67"/>
    </location>
    <ligand>
        <name>Mn(2+)</name>
        <dbReference type="ChEBI" id="CHEBI:29035"/>
    </ligand>
</feature>
<feature type="binding site" evidence="2 5 6 7">
    <location>
        <position position="139"/>
    </location>
    <ligand>
        <name>Mn(2+)</name>
        <dbReference type="ChEBI" id="CHEBI:29035"/>
    </ligand>
</feature>
<feature type="binding site" evidence="2 5 6 7">
    <location>
        <position position="205"/>
    </location>
    <ligand>
        <name>Mn(2+)</name>
        <dbReference type="ChEBI" id="CHEBI:29035"/>
    </ligand>
</feature>
<feature type="binding site" evidence="2 5 6 7">
    <location>
        <position position="280"/>
    </location>
    <ligand>
        <name>Mn(2+)</name>
        <dbReference type="ChEBI" id="CHEBI:29035"/>
    </ligand>
</feature>
<feature type="lipid moiety-binding region" description="N-palmitoyl cysteine" evidence="1">
    <location>
        <position position="20"/>
    </location>
</feature>
<feature type="lipid moiety-binding region" description="S-diacylglycerol cysteine" evidence="1">
    <location>
        <position position="20"/>
    </location>
</feature>
<feature type="sequence variant" description="In strain: NA-1508/92.">
    <original>L</original>
    <variation>F</variation>
    <location>
        <position position="8"/>
    </location>
</feature>
<feature type="sequence variant" description="In strain: NA-1064/97.">
    <original>V</original>
    <variation>I</variation>
    <location>
        <position position="9"/>
    </location>
</feature>
<feature type="sequence variant" description="In strain: NA-1064/97, NA-1383/97 and NA-1508/92.">
    <original>A</original>
    <variation>V</variation>
    <location>
        <position position="14"/>
    </location>
</feature>
<feature type="sequence variant" description="In strain: NA-1064/97 and NA-1383/97.">
    <original>I</original>
    <variation>A</variation>
    <location>
        <position position="16"/>
    </location>
</feature>
<feature type="sequence variant" description="In strain: NA-1508/92.">
    <original>I</original>
    <variation>V</variation>
    <location>
        <position position="16"/>
    </location>
</feature>
<feature type="sequence variant" description="In strain: NA-1064/97, NA-1383/97 and NA-1508/92.">
    <original>TT</original>
    <variation>AA</variation>
    <location>
        <begin position="27"/>
        <end position="28"/>
    </location>
</feature>
<feature type="sequence variant" description="In strain: NA-1064/97.">
    <original>G</original>
    <variation>S</variation>
    <location>
        <position position="30"/>
    </location>
</feature>
<feature type="sequence variant" description="In strain: NA-1383/97.">
    <original>I</original>
    <variation>V</variation>
    <location>
        <position position="62"/>
    </location>
</feature>
<feature type="sequence variant" description="In strain: NA-1383/97.">
    <original>E</original>
    <variation>Q</variation>
    <location>
        <position position="81"/>
    </location>
</feature>
<feature type="sequence variant" description="In strain: TIGR4.">
    <original>D</original>
    <variation>N</variation>
    <location>
        <position position="83"/>
    </location>
</feature>
<feature type="sequence variant" description="In strain: NA-1064/97, NA-1383/97 and NA-1508/92.">
    <original>D</original>
    <variation>E</variation>
    <location>
        <position position="120"/>
    </location>
</feature>
<feature type="sequence variant" description="In strain: NA-1064/97 and NA-1508/92.">
    <original>Q</original>
    <variation>K</variation>
    <location>
        <position position="130"/>
    </location>
</feature>
<feature type="sequence variant" description="In strain: NA-1383/97.">
    <original>I</original>
    <variation>M</variation>
    <location>
        <position position="148"/>
    </location>
</feature>
<feature type="sequence variant" description="In strain: NA-1383/97.">
    <original>N</original>
    <variation>S</variation>
    <location>
        <position position="164"/>
    </location>
</feature>
<feature type="sequence variant" description="In strain: NA-1383/97.">
    <original>SKD</original>
    <variation>AKE</variation>
    <location>
        <begin position="187"/>
        <end position="189"/>
    </location>
</feature>
<feature type="sequence variant" description="In strain: NA-1064/97, NA-1383/97 and NA-1508/92.">
    <original>K</original>
    <variation>N</variation>
    <location>
        <position position="193"/>
    </location>
</feature>
<feature type="sequence variant" description="In strain: NA-1383/97.">
    <original>A</original>
    <variation>C</variation>
    <location>
        <position position="207"/>
    </location>
</feature>
<feature type="sequence variant" description="In strain: NA-1383/97.">
    <original>E</original>
    <variation>D</variation>
    <location>
        <position position="234"/>
    </location>
</feature>
<feature type="sequence variant" description="In strain: NA-1383/97.">
    <original>V</original>
    <variation>T</variation>
    <location>
        <position position="248"/>
    </location>
</feature>
<feature type="sequence variant" description="In strain: NA-1508/92.">
    <original>Q</original>
    <variation>E</variation>
    <location>
        <position position="285"/>
    </location>
</feature>
<feature type="sequence variant" description="In strain: NA-1383/97.">
    <original>S</original>
    <variation>N</variation>
    <location>
        <position position="294"/>
    </location>
</feature>
<feature type="helix" evidence="9">
    <location>
        <begin position="27"/>
        <end position="29"/>
    </location>
</feature>
<feature type="strand" evidence="10">
    <location>
        <begin position="33"/>
        <end position="39"/>
    </location>
</feature>
<feature type="helix" evidence="10">
    <location>
        <begin position="40"/>
        <end position="50"/>
    </location>
</feature>
<feature type="helix" evidence="10">
    <location>
        <begin position="51"/>
        <end position="53"/>
    </location>
</feature>
<feature type="strand" evidence="10">
    <location>
        <begin position="54"/>
        <end position="60"/>
    </location>
</feature>
<feature type="strand" evidence="11">
    <location>
        <begin position="66"/>
        <end position="68"/>
    </location>
</feature>
<feature type="helix" evidence="10">
    <location>
        <begin position="73"/>
        <end position="81"/>
    </location>
</feature>
<feature type="strand" evidence="10">
    <location>
        <begin position="83"/>
        <end position="87"/>
    </location>
</feature>
<feature type="turn" evidence="10">
    <location>
        <begin position="90"/>
        <end position="94"/>
    </location>
</feature>
<feature type="turn" evidence="12">
    <location>
        <begin position="96"/>
        <end position="98"/>
    </location>
</feature>
<feature type="helix" evidence="10">
    <location>
        <begin position="99"/>
        <end position="106"/>
    </location>
</feature>
<feature type="turn" evidence="10">
    <location>
        <begin position="111"/>
        <end position="113"/>
    </location>
</feature>
<feature type="strand" evidence="10">
    <location>
        <begin position="114"/>
        <end position="117"/>
    </location>
</feature>
<feature type="turn" evidence="10">
    <location>
        <begin position="118"/>
        <end position="121"/>
    </location>
</feature>
<feature type="helix" evidence="10">
    <location>
        <begin position="127"/>
        <end position="129"/>
    </location>
</feature>
<feature type="helix" evidence="10">
    <location>
        <begin position="140"/>
        <end position="142"/>
    </location>
</feature>
<feature type="helix" evidence="10">
    <location>
        <begin position="144"/>
        <end position="161"/>
    </location>
</feature>
<feature type="helix" evidence="10">
    <location>
        <begin position="163"/>
        <end position="165"/>
    </location>
</feature>
<feature type="helix" evidence="10">
    <location>
        <begin position="166"/>
        <end position="193"/>
    </location>
</feature>
<feature type="helix" evidence="10">
    <location>
        <begin position="196"/>
        <end position="198"/>
    </location>
</feature>
<feature type="strand" evidence="10">
    <location>
        <begin position="201"/>
        <end position="206"/>
    </location>
</feature>
<feature type="helix" evidence="10">
    <location>
        <begin position="209"/>
        <end position="215"/>
    </location>
</feature>
<feature type="strand" evidence="10">
    <location>
        <begin position="219"/>
        <end position="223"/>
    </location>
</feature>
<feature type="helix" evidence="10">
    <location>
        <begin position="233"/>
        <end position="244"/>
    </location>
</feature>
<feature type="strand" evidence="10">
    <location>
        <begin position="251"/>
        <end position="254"/>
    </location>
</feature>
<feature type="helix" evidence="10">
    <location>
        <begin position="260"/>
        <end position="269"/>
    </location>
</feature>
<feature type="strand" evidence="10">
    <location>
        <begin position="273"/>
        <end position="277"/>
    </location>
</feature>
<feature type="strand" evidence="9">
    <location>
        <begin position="279"/>
        <end position="281"/>
    </location>
</feature>
<feature type="helix" evidence="10">
    <location>
        <begin position="292"/>
        <end position="307"/>
    </location>
</feature>
<proteinExistence type="evidence at protein level"/>
<gene>
    <name type="primary">psaA</name>
    <name type="ordered locus">SP_1650</name>
</gene>
<organism>
    <name type="scientific">Streptococcus pneumoniae serotype 4 (strain ATCC BAA-334 / TIGR4)</name>
    <dbReference type="NCBI Taxonomy" id="170187"/>
    <lineage>
        <taxon>Bacteria</taxon>
        <taxon>Bacillati</taxon>
        <taxon>Bacillota</taxon>
        <taxon>Bacilli</taxon>
        <taxon>Lactobacillales</taxon>
        <taxon>Streptococcaceae</taxon>
        <taxon>Streptococcus</taxon>
    </lineage>
</organism>
<accession>P0A4G2</accession>
<accession>P72538</accession>
<accession>Q54720</accession>
<accession>Q9L5X2</accession>
<accession>Q9L5X3</accession>
<accession>Q9L5X4</accession>
<accession>Q9R6P5</accession>
<keyword id="KW-0002">3D-structure</keyword>
<keyword id="KW-1003">Cell membrane</keyword>
<keyword id="KW-0449">Lipoprotein</keyword>
<keyword id="KW-0464">Manganese</keyword>
<keyword id="KW-0472">Membrane</keyword>
<keyword id="KW-0479">Metal-binding</keyword>
<keyword id="KW-0564">Palmitate</keyword>
<keyword id="KW-1185">Reference proteome</keyword>
<keyword id="KW-0732">Signal</keyword>
<keyword id="KW-0813">Transport</keyword>
<reference key="1">
    <citation type="submission" date="1996-04" db="EMBL/GenBank/DDBJ databases">
        <title>Streptococcus pneumoniae surface adhesin A.</title>
        <authorList>
            <person name="Sampson J.S."/>
            <person name="Whitney A.M."/>
            <person name="Furlow Z."/>
        </authorList>
    </citation>
    <scope>NUCLEOTIDE SEQUENCE [GENOMIC DNA]</scope>
    <source>
        <strain>6B</strain>
    </source>
</reference>
<reference key="2">
    <citation type="journal article" date="1996" name="Infect. Immun.">
        <title>Sequence heterogeneity of PsaA, a 37-kilodalton putative adhesin essential for virulence of Streptococcus pneumoniae.</title>
        <authorList>
            <person name="Berry A.M."/>
            <person name="Paton J.C."/>
        </authorList>
    </citation>
    <scope>NUCLEOTIDE SEQUENCE [GENOMIC DNA]</scope>
    <source>
        <strain>D39 / NCTC 7466 / Serotype 2</strain>
    </source>
</reference>
<reference key="3">
    <citation type="journal article" date="1998" name="Mol. Microbiol.">
        <title>Penicillin tolerance genes of Streptococcus pneumoniae: the ABC-type manganese permease complex Psa.</title>
        <authorList>
            <person name="Novak R."/>
            <person name="Braun J.S."/>
            <person name="Charpentier E."/>
            <person name="Tuomanen E."/>
        </authorList>
    </citation>
    <scope>NUCLEOTIDE SEQUENCE [GENOMIC DNA]</scope>
</reference>
<reference key="4">
    <citation type="submission" date="2000-03" db="EMBL/GenBank/DDBJ databases">
        <title>Identification of a psaA gene in viridans streptococcal strains.</title>
        <authorList>
            <person name="Perez A."/>
            <person name="Jado I."/>
            <person name="Casal J."/>
        </authorList>
    </citation>
    <scope>NUCLEOTIDE SEQUENCE [GENOMIC DNA]</scope>
    <source>
        <strain>NA-1064/97</strain>
        <strain>NA-1283/96</strain>
        <strain>NA-1383/97</strain>
        <strain>NA-1508/92</strain>
    </source>
</reference>
<reference key="5">
    <citation type="journal article" date="2001" name="Science">
        <title>Complete genome sequence of a virulent isolate of Streptococcus pneumoniae.</title>
        <authorList>
            <person name="Tettelin H."/>
            <person name="Nelson K.E."/>
            <person name="Paulsen I.T."/>
            <person name="Eisen J.A."/>
            <person name="Read T.D."/>
            <person name="Peterson S.N."/>
            <person name="Heidelberg J.F."/>
            <person name="DeBoy R.T."/>
            <person name="Haft D.H."/>
            <person name="Dodson R.J."/>
            <person name="Durkin A.S."/>
            <person name="Gwinn M.L."/>
            <person name="Kolonay J.F."/>
            <person name="Nelson W.C."/>
            <person name="Peterson J.D."/>
            <person name="Umayam L.A."/>
            <person name="White O."/>
            <person name="Salzberg S.L."/>
            <person name="Lewis M.R."/>
            <person name="Radune D."/>
            <person name="Holtzapple E.K."/>
            <person name="Khouri H.M."/>
            <person name="Wolf A.M."/>
            <person name="Utterback T.R."/>
            <person name="Hansen C.L."/>
            <person name="McDonald L.A."/>
            <person name="Feldblyum T.V."/>
            <person name="Angiuoli S.V."/>
            <person name="Dickinson T."/>
            <person name="Hickey E.K."/>
            <person name="Holt I.E."/>
            <person name="Loftus B.J."/>
            <person name="Yang F."/>
            <person name="Smith H.O."/>
            <person name="Venter J.C."/>
            <person name="Dougherty B.A."/>
            <person name="Morrison D.A."/>
            <person name="Hollingshead S.K."/>
            <person name="Fraser C.M."/>
        </authorList>
    </citation>
    <scope>NUCLEOTIDE SEQUENCE [LARGE SCALE GENOMIC DNA]</scope>
    <source>
        <strain>ATCC BAA-334 / TIGR4</strain>
    </source>
</reference>
<reference key="6">
    <citation type="journal article" date="1997" name="Mol. Microbiol.">
        <title>Competence and virulence of Streptococcus pneumoniae: Adc and PsaA mutants exhibit a requirement for Zn and Mn resulting from inactivation of putative ABC metal permeases.</title>
        <authorList>
            <person name="Dintilhac A."/>
            <person name="Alloing G."/>
            <person name="Granadel C."/>
            <person name="Claverys J.-P."/>
        </authorList>
    </citation>
    <scope>FUNCTION</scope>
</reference>
<reference evidence="7" key="7">
    <citation type="journal article" date="1998" name="Structure">
        <title>The crystal structure of pneumococcal surface antigen PsaA reveals a metal-binding site and a novel structure for a putative ABC-type binding protein.</title>
        <authorList>
            <person name="Lawrence M.C."/>
            <person name="Pilling P.A."/>
            <person name="Epa V.C."/>
            <person name="Berry A.M."/>
            <person name="Ogunniyi A.D."/>
            <person name="Paton J.C."/>
        </authorList>
    </citation>
    <scope>X-RAY CRYSTALLOGRAPHY (2.0 ANGSTROMS) OF 19-309 IN COMPLEX WITH ZINC</scope>
</reference>
<reference evidence="8" key="8">
    <citation type="journal article" date="2011" name="PLoS Pathog.">
        <title>A molecular mechanism for bacterial susceptibility to zinc.</title>
        <authorList>
            <person name="McDevitt C.A."/>
            <person name="Ogunniyi A.D."/>
            <person name="Valkov E."/>
            <person name="Lawrence M.C."/>
            <person name="Kobe B."/>
            <person name="McEwan A.G."/>
            <person name="Paton J.C."/>
        </authorList>
    </citation>
    <scope>X-RAY CRYSTALLOGRAPHY (2.70 ANGSTROMS) OF 19-309 IN COMPLEX WITH MANGANESE</scope>
    <scope>FUNCTION</scope>
    <scope>DISRUPTION PHENOTYPE</scope>
</reference>
<protein>
    <recommendedName>
        <fullName evidence="4">Manganese ABC transporter substrate-binding lipoprotein PsaA</fullName>
    </recommendedName>
    <alternativeName>
        <fullName>Pneumococcal surface adhesin A</fullName>
    </alternativeName>
</protein>
<evidence type="ECO:0000255" key="1">
    <source>
        <dbReference type="PROSITE-ProRule" id="PRU00303"/>
    </source>
</evidence>
<evidence type="ECO:0000269" key="2">
    <source>
    </source>
</evidence>
<evidence type="ECO:0000269" key="3">
    <source>
    </source>
</evidence>
<evidence type="ECO:0000305" key="4"/>
<evidence type="ECO:0000305" key="5">
    <source>
    </source>
</evidence>
<evidence type="ECO:0000312" key="6">
    <source>
        <dbReference type="PDB" id="3ZTT"/>
    </source>
</evidence>
<evidence type="ECO:0007744" key="7">
    <source>
        <dbReference type="PDB" id="1PSZ"/>
    </source>
</evidence>
<evidence type="ECO:0007744" key="8">
    <source>
        <dbReference type="PDB" id="3ZTT"/>
    </source>
</evidence>
<evidence type="ECO:0007829" key="9">
    <source>
        <dbReference type="PDB" id="1PSZ"/>
    </source>
</evidence>
<evidence type="ECO:0007829" key="10">
    <source>
        <dbReference type="PDB" id="3ZK9"/>
    </source>
</evidence>
<evidence type="ECO:0007829" key="11">
    <source>
        <dbReference type="PDB" id="3ZKA"/>
    </source>
</evidence>
<evidence type="ECO:0007829" key="12">
    <source>
        <dbReference type="PDB" id="3ZTT"/>
    </source>
</evidence>
<sequence length="309" mass="34594">MKKLGTLLVLFLSAIILVACASGKKDTTSGQKLKVVATNSIIADITKNIAGDKIDLHSIVPIGQDPHEYEPLPEDVKKTSEADLIFYNGINLETGGNAWFTKLVENAKKTENKDYFAVSDGVDVIYLEGQNEKGKEDPHAWLNLENGIIFAKNIAKQLSAKDPNNKEFYEKNLKEYTDKLDKLDKESKDKFNKIPAEKKLIVTSEGAFKYFSKAYGVPSAYIWEINTEEEGTPEQIKTLVEKLRQTKVPSLFVESSVDDRPMKTVSQDTNIPIYAQIFTDSIAEQGKEGDSYYSMMKYNLDKIAEGLAK</sequence>